<evidence type="ECO:0000250" key="1"/>
<evidence type="ECO:0000250" key="2">
    <source>
        <dbReference type="UniProtKB" id="P23582"/>
    </source>
</evidence>
<evidence type="ECO:0000250" key="3">
    <source>
        <dbReference type="UniProtKB" id="Q61839"/>
    </source>
</evidence>
<evidence type="ECO:0000255" key="4"/>
<evidence type="ECO:0000256" key="5">
    <source>
        <dbReference type="SAM" id="MobiDB-lite"/>
    </source>
</evidence>
<evidence type="ECO:0000305" key="6"/>
<accession>P55207</accession>
<protein>
    <recommendedName>
        <fullName>C-type natriuretic peptide</fullName>
    </recommendedName>
    <component>
        <recommendedName>
            <fullName>CNP-22</fullName>
        </recommendedName>
    </component>
    <component>
        <recommendedName>
            <fullName>CNP-29</fullName>
        </recommendedName>
    </component>
    <component>
        <recommendedName>
            <fullName>CNP-53</fullName>
        </recommendedName>
    </component>
</protein>
<reference key="1">
    <citation type="journal article" date="1990" name="FEBS Lett.">
        <title>Cloning and sequence analysis of a cDNA encoding a precursor for rat C-type natriuretic peptide (CNP).</title>
        <authorList>
            <person name="Kojima M."/>
            <person name="Minamino N."/>
            <person name="Kangawa K."/>
            <person name="Matsuo H."/>
        </authorList>
    </citation>
    <scope>NUCLEOTIDE SEQUENCE [MRNA]</scope>
</reference>
<gene>
    <name type="primary">Nppc</name>
    <name type="synonym">Cnp</name>
</gene>
<feature type="signal peptide" evidence="4">
    <location>
        <begin position="1"/>
        <end position="23"/>
    </location>
</feature>
<feature type="propeptide" id="PRO_0000001565">
    <location>
        <begin position="24"/>
        <end position="73"/>
    </location>
</feature>
<feature type="peptide" id="PRO_0000001566" description="CNP-53">
    <location>
        <begin position="74"/>
        <end position="126"/>
    </location>
</feature>
<feature type="peptide" id="PRO_0000001567" description="CNP-29" evidence="1">
    <location>
        <begin position="98"/>
        <end position="126"/>
    </location>
</feature>
<feature type="peptide" id="PRO_0000001568" description="CNP-22">
    <location>
        <begin position="105"/>
        <end position="126"/>
    </location>
</feature>
<feature type="region of interest" description="Disordered" evidence="5">
    <location>
        <begin position="19"/>
        <end position="71"/>
    </location>
</feature>
<feature type="compositionally biased region" description="Pro residues" evidence="5">
    <location>
        <begin position="26"/>
        <end position="35"/>
    </location>
</feature>
<feature type="disulfide bond" evidence="1">
    <location>
        <begin position="110"/>
        <end position="126"/>
    </location>
</feature>
<keyword id="KW-0165">Cleavage on pair of basic residues</keyword>
<keyword id="KW-1015">Disulfide bond</keyword>
<keyword id="KW-0372">Hormone</keyword>
<keyword id="KW-0892">Osteogenesis</keyword>
<keyword id="KW-1185">Reference proteome</keyword>
<keyword id="KW-0964">Secreted</keyword>
<keyword id="KW-0732">Signal</keyword>
<keyword id="KW-0838">Vasoactive</keyword>
<dbReference type="EMBL" id="D90219">
    <property type="protein sequence ID" value="BAA14250.1"/>
    <property type="molecule type" value="mRNA"/>
</dbReference>
<dbReference type="PIR" id="S12988">
    <property type="entry name" value="S12988"/>
</dbReference>
<dbReference type="RefSeq" id="NP_446202.1">
    <property type="nucleotide sequence ID" value="NM_053750.1"/>
</dbReference>
<dbReference type="FunCoup" id="P55207">
    <property type="interactions" value="477"/>
</dbReference>
<dbReference type="STRING" id="10116.ENSRNOP00000025582"/>
<dbReference type="iPTMnet" id="P55207"/>
<dbReference type="PhosphoSitePlus" id="P55207"/>
<dbReference type="PaxDb" id="10116-ENSRNOP00000025582"/>
<dbReference type="Ensembl" id="ENSRNOT00000025582.3">
    <property type="protein sequence ID" value="ENSRNOP00000025582.1"/>
    <property type="gene ID" value="ENSRNOG00000018854.3"/>
</dbReference>
<dbReference type="GeneID" id="114593"/>
<dbReference type="KEGG" id="rno:114593"/>
<dbReference type="UCSC" id="RGD:620850">
    <property type="organism name" value="rat"/>
</dbReference>
<dbReference type="AGR" id="RGD:620850"/>
<dbReference type="CTD" id="4880"/>
<dbReference type="RGD" id="620850">
    <property type="gene designation" value="Nppc"/>
</dbReference>
<dbReference type="eggNOG" id="ENOG502S2QY">
    <property type="taxonomic scope" value="Eukaryota"/>
</dbReference>
<dbReference type="GeneTree" id="ENSGT00390000015492"/>
<dbReference type="HOGENOM" id="CLU_160791_0_0_1"/>
<dbReference type="InParanoid" id="P55207"/>
<dbReference type="OMA" id="HDYPNAR"/>
<dbReference type="OrthoDB" id="8911465at2759"/>
<dbReference type="PhylomeDB" id="P55207"/>
<dbReference type="TreeFam" id="TF106305"/>
<dbReference type="Reactome" id="R-RNO-5578768">
    <property type="pathway name" value="Physiological factors"/>
</dbReference>
<dbReference type="PRO" id="PR:P55207"/>
<dbReference type="Proteomes" id="UP000002494">
    <property type="component" value="Chromosome 9"/>
</dbReference>
<dbReference type="Bgee" id="ENSRNOG00000018854">
    <property type="expression patterns" value="Expressed in cerebellum and 11 other cell types or tissues"/>
</dbReference>
<dbReference type="GO" id="GO:0005615">
    <property type="term" value="C:extracellular space"/>
    <property type="evidence" value="ECO:0000314"/>
    <property type="project" value="RGD"/>
</dbReference>
<dbReference type="GO" id="GO:0032991">
    <property type="term" value="C:protein-containing complex"/>
    <property type="evidence" value="ECO:0000266"/>
    <property type="project" value="RGD"/>
</dbReference>
<dbReference type="GO" id="GO:0030141">
    <property type="term" value="C:secretory granule"/>
    <property type="evidence" value="ECO:0000314"/>
    <property type="project" value="RGD"/>
</dbReference>
<dbReference type="GO" id="GO:0005179">
    <property type="term" value="F:hormone activity"/>
    <property type="evidence" value="ECO:0000314"/>
    <property type="project" value="RGD"/>
</dbReference>
<dbReference type="GO" id="GO:0051427">
    <property type="term" value="F:hormone receptor binding"/>
    <property type="evidence" value="ECO:0000266"/>
    <property type="project" value="RGD"/>
</dbReference>
<dbReference type="GO" id="GO:0005102">
    <property type="term" value="F:signaling receptor binding"/>
    <property type="evidence" value="ECO:0000266"/>
    <property type="project" value="RGD"/>
</dbReference>
<dbReference type="GO" id="GO:0001525">
    <property type="term" value="P:angiogenesis"/>
    <property type="evidence" value="ECO:0000266"/>
    <property type="project" value="RGD"/>
</dbReference>
<dbReference type="GO" id="GO:0048513">
    <property type="term" value="P:animal organ development"/>
    <property type="evidence" value="ECO:0000266"/>
    <property type="project" value="RGD"/>
</dbReference>
<dbReference type="GO" id="GO:0097746">
    <property type="term" value="P:blood vessel diameter maintenance"/>
    <property type="evidence" value="ECO:0007669"/>
    <property type="project" value="UniProtKB-KW"/>
</dbReference>
<dbReference type="GO" id="GO:0001974">
    <property type="term" value="P:blood vessel remodeling"/>
    <property type="evidence" value="ECO:0000266"/>
    <property type="project" value="RGD"/>
</dbReference>
<dbReference type="GO" id="GO:0061939">
    <property type="term" value="P:c-di-GMP signaling"/>
    <property type="evidence" value="ECO:0000266"/>
    <property type="project" value="RGD"/>
</dbReference>
<dbReference type="GO" id="GO:1904588">
    <property type="term" value="P:cellular response to glycoprotein"/>
    <property type="evidence" value="ECO:0000266"/>
    <property type="project" value="RGD"/>
</dbReference>
<dbReference type="GO" id="GO:0006182">
    <property type="term" value="P:cGMP biosynthetic process"/>
    <property type="evidence" value="ECO:0000266"/>
    <property type="project" value="RGD"/>
</dbReference>
<dbReference type="GO" id="GO:0019934">
    <property type="term" value="P:cGMP-mediated signaling"/>
    <property type="evidence" value="ECO:0000314"/>
    <property type="project" value="RGD"/>
</dbReference>
<dbReference type="GO" id="GO:0051276">
    <property type="term" value="P:chromosome organization"/>
    <property type="evidence" value="ECO:0000266"/>
    <property type="project" value="RGD"/>
</dbReference>
<dbReference type="GO" id="GO:0001549">
    <property type="term" value="P:cumulus cell differentiation"/>
    <property type="evidence" value="ECO:0000266"/>
    <property type="project" value="RGD"/>
</dbReference>
<dbReference type="GO" id="GO:0035483">
    <property type="term" value="P:gastric emptying"/>
    <property type="evidence" value="ECO:0000266"/>
    <property type="project" value="RGD"/>
</dbReference>
<dbReference type="GO" id="GO:0003418">
    <property type="term" value="P:growth plate cartilage chondrocyte differentiation"/>
    <property type="evidence" value="ECO:0000250"/>
    <property type="project" value="UniProtKB"/>
</dbReference>
<dbReference type="GO" id="GO:0003419">
    <property type="term" value="P:growth plate cartilage chondrocyte proliferation"/>
    <property type="evidence" value="ECO:0000250"/>
    <property type="project" value="UniProtKB"/>
</dbReference>
<dbReference type="GO" id="GO:0006874">
    <property type="term" value="P:intracellular calcium ion homeostasis"/>
    <property type="evidence" value="ECO:0000266"/>
    <property type="project" value="RGD"/>
</dbReference>
<dbReference type="GO" id="GO:0051321">
    <property type="term" value="P:meiotic cell cycle"/>
    <property type="evidence" value="ECO:0000266"/>
    <property type="project" value="RGD"/>
</dbReference>
<dbReference type="GO" id="GO:1903537">
    <property type="term" value="P:meiotic cell cycle process involved in oocyte maturation"/>
    <property type="evidence" value="ECO:0000266"/>
    <property type="project" value="RGD"/>
</dbReference>
<dbReference type="GO" id="GO:0071965">
    <property type="term" value="P:multicellular organismal locomotion"/>
    <property type="evidence" value="ECO:0000266"/>
    <property type="project" value="RGD"/>
</dbReference>
<dbReference type="GO" id="GO:0008285">
    <property type="term" value="P:negative regulation of cell population proliferation"/>
    <property type="evidence" value="ECO:0000314"/>
    <property type="project" value="RGD"/>
</dbReference>
<dbReference type="GO" id="GO:0032966">
    <property type="term" value="P:negative regulation of collagen biosynthetic process"/>
    <property type="evidence" value="ECO:0000314"/>
    <property type="project" value="RGD"/>
</dbReference>
<dbReference type="GO" id="GO:2000279">
    <property type="term" value="P:negative regulation of DNA biosynthetic process"/>
    <property type="evidence" value="ECO:0000314"/>
    <property type="project" value="RGD"/>
</dbReference>
<dbReference type="GO" id="GO:0051447">
    <property type="term" value="P:negative regulation of meiotic cell cycle"/>
    <property type="evidence" value="ECO:0000266"/>
    <property type="project" value="RGD"/>
</dbReference>
<dbReference type="GO" id="GO:0043524">
    <property type="term" value="P:negative regulation of neuron apoptotic process"/>
    <property type="evidence" value="ECO:0000266"/>
    <property type="project" value="RGD"/>
</dbReference>
<dbReference type="GO" id="GO:1900194">
    <property type="term" value="P:negative regulation of oocyte maturation"/>
    <property type="evidence" value="ECO:0000266"/>
    <property type="project" value="RGD"/>
</dbReference>
<dbReference type="GO" id="GO:0048599">
    <property type="term" value="P:oocyte development"/>
    <property type="evidence" value="ECO:0000266"/>
    <property type="project" value="RGD"/>
</dbReference>
<dbReference type="GO" id="GO:0001503">
    <property type="term" value="P:ossification"/>
    <property type="evidence" value="ECO:0007669"/>
    <property type="project" value="UniProtKB-KW"/>
</dbReference>
<dbReference type="GO" id="GO:0001541">
    <property type="term" value="P:ovarian follicle development"/>
    <property type="evidence" value="ECO:0000266"/>
    <property type="project" value="RGD"/>
</dbReference>
<dbReference type="GO" id="GO:0010753">
    <property type="term" value="P:positive regulation of cGMP-mediated signaling"/>
    <property type="evidence" value="ECO:0000314"/>
    <property type="project" value="RGD"/>
</dbReference>
<dbReference type="GO" id="GO:0045669">
    <property type="term" value="P:positive regulation of osteoblast differentiation"/>
    <property type="evidence" value="ECO:0000314"/>
    <property type="project" value="RGD"/>
</dbReference>
<dbReference type="GO" id="GO:0009791">
    <property type="term" value="P:post-embryonic development"/>
    <property type="evidence" value="ECO:0000266"/>
    <property type="project" value="RGD"/>
</dbReference>
<dbReference type="GO" id="GO:0006457">
    <property type="term" value="P:protein folding"/>
    <property type="evidence" value="ECO:0000266"/>
    <property type="project" value="RGD"/>
</dbReference>
<dbReference type="GO" id="GO:0007168">
    <property type="term" value="P:receptor guanylyl cyclase signaling pathway"/>
    <property type="evidence" value="ECO:0000314"/>
    <property type="project" value="MGI"/>
</dbReference>
<dbReference type="GO" id="GO:0040014">
    <property type="term" value="P:regulation of multicellular organism growth"/>
    <property type="evidence" value="ECO:0000266"/>
    <property type="project" value="RGD"/>
</dbReference>
<dbReference type="GO" id="GO:0048660">
    <property type="term" value="P:regulation of smooth muscle cell proliferation"/>
    <property type="evidence" value="ECO:0000270"/>
    <property type="project" value="RGD"/>
</dbReference>
<dbReference type="GO" id="GO:0048678">
    <property type="term" value="P:response to axon injury"/>
    <property type="evidence" value="ECO:0000266"/>
    <property type="project" value="RGD"/>
</dbReference>
<dbReference type="GO" id="GO:0036293">
    <property type="term" value="P:response to decreased oxygen levels"/>
    <property type="evidence" value="ECO:0000266"/>
    <property type="project" value="RGD"/>
</dbReference>
<dbReference type="GO" id="GO:0045471">
    <property type="term" value="P:response to ethanol"/>
    <property type="evidence" value="ECO:0000270"/>
    <property type="project" value="RGD"/>
</dbReference>
<dbReference type="GO" id="GO:0001666">
    <property type="term" value="P:response to hypoxia"/>
    <property type="evidence" value="ECO:0000270"/>
    <property type="project" value="RGD"/>
</dbReference>
<dbReference type="GO" id="GO:0002931">
    <property type="term" value="P:response to ischemia"/>
    <property type="evidence" value="ECO:0000266"/>
    <property type="project" value="RGD"/>
</dbReference>
<dbReference type="GO" id="GO:0090649">
    <property type="term" value="P:response to oxygen-glucose deprivation"/>
    <property type="evidence" value="ECO:0000266"/>
    <property type="project" value="RGD"/>
</dbReference>
<dbReference type="GO" id="GO:0009611">
    <property type="term" value="P:response to wounding"/>
    <property type="evidence" value="ECO:0000266"/>
    <property type="project" value="RGD"/>
</dbReference>
<dbReference type="GO" id="GO:0009410">
    <property type="term" value="P:response to xenobiotic stimulus"/>
    <property type="evidence" value="ECO:0000270"/>
    <property type="project" value="RGD"/>
</dbReference>
<dbReference type="InterPro" id="IPR002406">
    <property type="entry name" value="C_natriurtcpep"/>
</dbReference>
<dbReference type="InterPro" id="IPR000663">
    <property type="entry name" value="Natr_peptide"/>
</dbReference>
<dbReference type="InterPro" id="IPR030480">
    <property type="entry name" value="Natr_peptide_CS"/>
</dbReference>
<dbReference type="PANTHER" id="PTHR12167">
    <property type="entry name" value="C-TYPE NATRIURETIC PEPTIDE"/>
    <property type="match status" value="1"/>
</dbReference>
<dbReference type="PANTHER" id="PTHR12167:SF2">
    <property type="entry name" value="C-TYPE NATRIURETIC PEPTIDE"/>
    <property type="match status" value="1"/>
</dbReference>
<dbReference type="Pfam" id="PF00212">
    <property type="entry name" value="ANP"/>
    <property type="match status" value="1"/>
</dbReference>
<dbReference type="PRINTS" id="PR00713">
    <property type="entry name" value="CNATPEPTIDE"/>
</dbReference>
<dbReference type="PRINTS" id="PR00710">
    <property type="entry name" value="NATPEPTIDES"/>
</dbReference>
<dbReference type="SMART" id="SM00183">
    <property type="entry name" value="NAT_PEP"/>
    <property type="match status" value="1"/>
</dbReference>
<dbReference type="PROSITE" id="PS00263">
    <property type="entry name" value="NATRIURETIC_PEPTIDE"/>
    <property type="match status" value="1"/>
</dbReference>
<name>ANFC_RAT</name>
<proteinExistence type="evidence at transcript level"/>
<organism>
    <name type="scientific">Rattus norvegicus</name>
    <name type="common">Rat</name>
    <dbReference type="NCBI Taxonomy" id="10116"/>
    <lineage>
        <taxon>Eukaryota</taxon>
        <taxon>Metazoa</taxon>
        <taxon>Chordata</taxon>
        <taxon>Craniata</taxon>
        <taxon>Vertebrata</taxon>
        <taxon>Euteleostomi</taxon>
        <taxon>Mammalia</taxon>
        <taxon>Eutheria</taxon>
        <taxon>Euarchontoglires</taxon>
        <taxon>Glires</taxon>
        <taxon>Rodentia</taxon>
        <taxon>Myomorpha</taxon>
        <taxon>Muroidea</taxon>
        <taxon>Muridae</taxon>
        <taxon>Murinae</taxon>
        <taxon>Rattus</taxon>
    </lineage>
</organism>
<comment type="function">
    <molecule>CNP-22</molecule>
    <text evidence="2 3">Hormone which plays a role in endochondral ossification through regulation of cartilaginous growth plate chondrocytes proliferation and differentiation (By similarity). May also be vasoactive and natriuretic. Acts by specifically binding and stimulating NPR2 to produce cGMP. Binds the clearance receptor NPR3 (By similarity).</text>
</comment>
<comment type="subcellular location">
    <subcellularLocation>
        <location>Secreted</location>
    </subcellularLocation>
</comment>
<comment type="tissue specificity">
    <text>Expressed exclusively in brain.</text>
</comment>
<comment type="PTM">
    <molecule>CNP-22</molecule>
    <text evidence="2">Degraded by IDE (in vitro).</text>
</comment>
<comment type="similarity">
    <text evidence="6">Belongs to the natriuretic peptide family.</text>
</comment>
<sequence>MHLSQLIACALLLALLSLRPSEAKPGTPPKVPRTPPGEELAEPQAAGGNQKKGDKTPGGGGANLKGDRSRLLRDLRVDTKSRAAWARLLHEHPNARKYKGGNKKGLSKGCFGLKLDRIGSMSGLGC</sequence>